<evidence type="ECO:0000250" key="1"/>
<evidence type="ECO:0000250" key="2">
    <source>
        <dbReference type="UniProtKB" id="P38377"/>
    </source>
</evidence>
<evidence type="ECO:0000250" key="3">
    <source>
        <dbReference type="UniProtKB" id="P61619"/>
    </source>
</evidence>
<evidence type="ECO:0000255" key="4"/>
<evidence type="ECO:0000305" key="5"/>
<feature type="initiator methionine" description="Removed" evidence="1">
    <location>
        <position position="1"/>
    </location>
</feature>
<feature type="chain" id="PRO_0000131808" description="Protein transport protein Sec61 subunit alpha">
    <location>
        <begin position="2"/>
        <end position="476"/>
    </location>
</feature>
<feature type="topological domain" description="Cytoplasmic" evidence="4">
    <location>
        <begin position="2"/>
        <end position="33"/>
    </location>
</feature>
<feature type="transmembrane region" description="Helical" evidence="4">
    <location>
        <begin position="34"/>
        <end position="53"/>
    </location>
</feature>
<feature type="topological domain" description="Lumenal" evidence="4">
    <location>
        <begin position="54"/>
        <end position="76"/>
    </location>
</feature>
<feature type="transmembrane region" description="Helical" evidence="4">
    <location>
        <begin position="77"/>
        <end position="96"/>
    </location>
</feature>
<feature type="topological domain" description="Cytoplasmic" evidence="4">
    <location>
        <begin position="97"/>
        <end position="117"/>
    </location>
</feature>
<feature type="transmembrane region" description="Helical" evidence="4">
    <location>
        <begin position="118"/>
        <end position="138"/>
    </location>
</feature>
<feature type="topological domain" description="Lumenal" evidence="4">
    <location>
        <begin position="139"/>
        <end position="144"/>
    </location>
</feature>
<feature type="transmembrane region" description="Helical" evidence="4">
    <location>
        <begin position="145"/>
        <end position="165"/>
    </location>
</feature>
<feature type="topological domain" description="Cytoplasmic" evidence="4">
    <location>
        <begin position="166"/>
        <end position="172"/>
    </location>
</feature>
<feature type="transmembrane region" description="Helical" evidence="4">
    <location>
        <begin position="173"/>
        <end position="193"/>
    </location>
</feature>
<feature type="topological domain" description="Lumenal" evidence="4">
    <location>
        <begin position="194"/>
        <end position="240"/>
    </location>
</feature>
<feature type="transmembrane region" description="Helical" evidence="4">
    <location>
        <begin position="241"/>
        <end position="261"/>
    </location>
</feature>
<feature type="topological domain" description="Cytoplasmic" evidence="4">
    <location>
        <begin position="262"/>
        <end position="288"/>
    </location>
</feature>
<feature type="transmembrane region" description="Helical" evidence="4">
    <location>
        <begin position="289"/>
        <end position="309"/>
    </location>
</feature>
<feature type="topological domain" description="Lumenal" evidence="4">
    <location>
        <begin position="310"/>
        <end position="354"/>
    </location>
</feature>
<feature type="transmembrane region" description="Helical" evidence="4">
    <location>
        <begin position="355"/>
        <end position="375"/>
    </location>
</feature>
<feature type="topological domain" description="Cytoplasmic" evidence="4">
    <location>
        <begin position="376"/>
        <end position="420"/>
    </location>
</feature>
<feature type="transmembrane region" description="Helical" evidence="4">
    <location>
        <begin position="421"/>
        <end position="441"/>
    </location>
</feature>
<feature type="topological domain" description="Lumenal" evidence="4">
    <location>
        <begin position="442"/>
        <end position="445"/>
    </location>
</feature>
<feature type="transmembrane region" description="Helical" evidence="4">
    <location>
        <begin position="446"/>
        <end position="462"/>
    </location>
</feature>
<feature type="topological domain" description="Cytoplasmic" evidence="4">
    <location>
        <begin position="463"/>
        <end position="476"/>
    </location>
</feature>
<organism>
    <name type="scientific">Pagothenia borchgrevinki</name>
    <name type="common">Bald rockcod</name>
    <name type="synonym">Trematomus borchgrevinki</name>
    <dbReference type="NCBI Taxonomy" id="8213"/>
    <lineage>
        <taxon>Eukaryota</taxon>
        <taxon>Metazoa</taxon>
        <taxon>Chordata</taxon>
        <taxon>Craniata</taxon>
        <taxon>Vertebrata</taxon>
        <taxon>Euteleostomi</taxon>
        <taxon>Actinopterygii</taxon>
        <taxon>Neopterygii</taxon>
        <taxon>Teleostei</taxon>
        <taxon>Neoteleostei</taxon>
        <taxon>Acanthomorphata</taxon>
        <taxon>Eupercaria</taxon>
        <taxon>Perciformes</taxon>
        <taxon>Notothenioidei</taxon>
        <taxon>Nototheniidae</taxon>
        <taxon>Pagothenia</taxon>
    </lineage>
</organism>
<name>SC61A_PAGBO</name>
<keyword id="KW-0217">Developmental protein</keyword>
<keyword id="KW-0256">Endoplasmic reticulum</keyword>
<keyword id="KW-0472">Membrane</keyword>
<keyword id="KW-0653">Protein transport</keyword>
<keyword id="KW-0811">Translocation</keyword>
<keyword id="KW-0812">Transmembrane</keyword>
<keyword id="KW-1133">Transmembrane helix</keyword>
<keyword id="KW-0813">Transport</keyword>
<protein>
    <recommendedName>
        <fullName>Protein transport protein Sec61 subunit alpha</fullName>
    </recommendedName>
</protein>
<dbReference type="EMBL" id="AY103471">
    <property type="protein sequence ID" value="AAM52487.1"/>
    <property type="molecule type" value="mRNA"/>
</dbReference>
<dbReference type="SMR" id="Q8AY36"/>
<dbReference type="GO" id="GO:0005789">
    <property type="term" value="C:endoplasmic reticulum membrane"/>
    <property type="evidence" value="ECO:0000250"/>
    <property type="project" value="UniProtKB"/>
</dbReference>
<dbReference type="GO" id="GO:0039019">
    <property type="term" value="P:pronephric nephron development"/>
    <property type="evidence" value="ECO:0000250"/>
    <property type="project" value="UniProtKB"/>
</dbReference>
<dbReference type="GO" id="GO:0045047">
    <property type="term" value="P:protein targeting to ER"/>
    <property type="evidence" value="ECO:0000250"/>
    <property type="project" value="UniProtKB"/>
</dbReference>
<dbReference type="GO" id="GO:0015031">
    <property type="term" value="P:protein transport"/>
    <property type="evidence" value="ECO:0007669"/>
    <property type="project" value="UniProtKB-KW"/>
</dbReference>
<dbReference type="FunFam" id="1.10.3370.10:FF:000002">
    <property type="entry name" value="Transport Sec61 subunit alpha isoform 2"/>
    <property type="match status" value="1"/>
</dbReference>
<dbReference type="Gene3D" id="1.10.3370.10">
    <property type="entry name" value="SecY subunit domain"/>
    <property type="match status" value="1"/>
</dbReference>
<dbReference type="InterPro" id="IPR002208">
    <property type="entry name" value="SecY/SEC61-alpha"/>
</dbReference>
<dbReference type="InterPro" id="IPR030659">
    <property type="entry name" value="SecY_CS"/>
</dbReference>
<dbReference type="InterPro" id="IPR023201">
    <property type="entry name" value="SecY_dom_sf"/>
</dbReference>
<dbReference type="InterPro" id="IPR019561">
    <property type="entry name" value="Translocon_Sec61/SecY_plug_dom"/>
</dbReference>
<dbReference type="NCBIfam" id="TIGR00967">
    <property type="entry name" value="3a0501s007"/>
    <property type="match status" value="1"/>
</dbReference>
<dbReference type="NCBIfam" id="NF006341">
    <property type="entry name" value="PRK08568.1-5"/>
    <property type="match status" value="1"/>
</dbReference>
<dbReference type="PANTHER" id="PTHR10906">
    <property type="entry name" value="SECY/SEC61-ALPHA FAMILY MEMBER"/>
    <property type="match status" value="1"/>
</dbReference>
<dbReference type="Pfam" id="PF10559">
    <property type="entry name" value="Plug_translocon"/>
    <property type="match status" value="1"/>
</dbReference>
<dbReference type="Pfam" id="PF00344">
    <property type="entry name" value="SecY"/>
    <property type="match status" value="1"/>
</dbReference>
<dbReference type="PIRSF" id="PIRSF004557">
    <property type="entry name" value="SecY"/>
    <property type="match status" value="1"/>
</dbReference>
<dbReference type="SUPFAM" id="SSF103491">
    <property type="entry name" value="Preprotein translocase SecY subunit"/>
    <property type="match status" value="1"/>
</dbReference>
<dbReference type="PROSITE" id="PS00755">
    <property type="entry name" value="SECY_1"/>
    <property type="match status" value="1"/>
</dbReference>
<dbReference type="PROSITE" id="PS00756">
    <property type="entry name" value="SECY_2"/>
    <property type="match status" value="1"/>
</dbReference>
<sequence length="476" mass="52316">MGIKFLEFIKPFCAVLPEIQKPERKIQFREKVLWTAITLFIFLVCCQIPLFGIMSSDSADPFYWMRVILASNRGTLMELGISPIVTSGLIMQLLAGAKIIEVGDTPKDRALFNGAQKLFGMIITIGQAIVYVMTGMYGDPSEMGAGICLLIIIQLFVAGLIVLLLDELLQKGYGLGSGISLFIATNICETIVWKAFSPTTVNTGRGTEFEGAIIALFHLLATRTDKVRALREAFYRQNLPNILNLIATVFVFAVVIYFQGFRVDLPIKSARYRGQYNTYPIKLFYTSNIPIILQSALVSNLYVISQMLSTRFSGNFLVNLLGTWSDATSGGPARAYPVAGLCYYLSPPESFGSVLDDPVHAAIYIVFMLGSCAFFSKTWIEVSGSSAKDVAKQLKEQQMVMRGHRETSMVHELNRYIPTAAAFGGLCIGGLSVMADFLGAIGSGTGILLAVTIIYQYFEIFVKEQSEMGSMGALLF</sequence>
<accession>Q8AY36</accession>
<reference key="1">
    <citation type="journal article" date="2003" name="J. Cell Sci.">
        <title>Protein translocation across the endoplasmic reticulum membrane in cold-adapted organisms.</title>
        <authorList>
            <person name="Romisch K."/>
            <person name="Collie N."/>
            <person name="Soto N."/>
            <person name="Logue J."/>
            <person name="Lindsay M."/>
            <person name="Scheper W."/>
            <person name="Cheng C.-H.C."/>
        </authorList>
    </citation>
    <scope>NUCLEOTIDE SEQUENCE [MRNA]</scope>
    <source>
        <tissue>Liver</tissue>
    </source>
</reference>
<gene>
    <name type="primary">sec61a</name>
</gene>
<proteinExistence type="evidence at transcript level"/>
<comment type="function">
    <text evidence="3">Component of SEC61 channel-forming translocon complex that mediates transport of signal peptide-containing precursor polypeptides across the endoplasmic reticulum (ER). Forms a ribosome receptor and a gated pore in the ER membrane, both functions required for cotranslational translocation of nascent polypeptides. May cooperate with auxiliary protein SEC62, SEC63 and HSPA5/BiP to enable post-translational transport of small presecretory proteins. The SEC61 channel is also involved in ER membrane insertion of transmembrane proteins: it mediates membrane insertion of the first few transmembrane segments of proteins, while insertion of subsequent transmembrane regions of multi-pass membrane proteins is mediated by the multi-pass translocon (MPT) complex.</text>
</comment>
<comment type="subunit">
    <text evidence="2 3">The SEC61 channel-forming translocon complex consists of channel-forming core components SEC61A1, SEC61B and SEC61G and different auxiliary components such as SEC62 and SEC63 (By similarity). The SEC61 channel associates with the multi-pass translocon (MPT) complex (By similarity).</text>
</comment>
<comment type="subcellular location">
    <subcellularLocation>
        <location evidence="3">Endoplasmic reticulum membrane</location>
        <topology evidence="3">Multi-pass membrane protein</topology>
    </subcellularLocation>
</comment>
<comment type="similarity">
    <text evidence="5">Belongs to the SecY/SEC61-alpha family.</text>
</comment>